<gene>
    <name type="primary">CAPRIN1</name>
    <name type="synonym">RNG105</name>
</gene>
<protein>
    <recommendedName>
        <fullName>Caprin-1</fullName>
    </recommendedName>
    <alternativeName>
        <fullName>Cytoplasmic activation- and proliferation-associated protein 1</fullName>
    </alternativeName>
    <alternativeName>
        <fullName>RNA granule protein 105</fullName>
    </alternativeName>
</protein>
<reference key="1">
    <citation type="submission" date="2006-05" db="EMBL/GenBank/DDBJ databases">
        <authorList>
            <consortium name="NIH - Mammalian Gene Collection (MGC) project"/>
        </authorList>
    </citation>
    <scope>NUCLEOTIDE SEQUENCE [LARGE SCALE MRNA]</scope>
    <source>
        <strain>Hereford</strain>
        <tissue>Fetal ascending colon</tissue>
    </source>
</reference>
<sequence>MPSATSHSGSGSKSSGPPPPSGSSGNEAGAGAAAPASQHPMTGTGAVQTEAMKQILGVIDKKLRNLEKKKGKLDDYQERMNKGERLNQDQLDAVSKYQEVTNNLEFAKELQRSFMALSQDIQKTIKKTARREQLMREEAEQKRLKTVLELQYVLDKLGDDEVRTDLKQGLNGVPILSEEELSLLDEFYKLADPERDMSLRLNEQYEHASIHLWDLLEGKEKPVCGTTYKALKEIVERVFQSNYFDSTHNHQNGLCEEEEAASAPTVEDQAAEAEPEPVEEYTEQNEVESTEYVNRQFMAETQFSSGEKEQVDDWTVETVEVVNSLQQQPQAASPSVPEPHSLTPVAQADPLVRRQRVQDLMAQMQGPYNFIQDSMLDFENQTLDPAIVSAQPMNPAQNMDIPQLVCPPVHSESRLAQPNQVSVQPEATQVPLVSSTSEGYTASQPLYQPSHATDQRPQKEPIDQIQATISLNTDQTTASSSLPAASQPQVFQAGTSKPLHSSGINVNAAPFQSMQTVFNMNAPVPPVNEPETLKQQNQYQASYNQSFSSQPHQVEQTELQQEQLQTVVGTYHGSQDQPHQVTGNHQQPPQQNTGFPRSNQPYYNSRGVSRGGSRGARGLMNGYRGPANGFRGGYDGYRPSFSTNTPNSGYTQSQFSAPRDYSGYQRDGYQQNFKRGSGQSGPRGAPRGRGGPPRPNRGMPQMNTQQVN</sequence>
<organism>
    <name type="scientific">Bos taurus</name>
    <name type="common">Bovine</name>
    <dbReference type="NCBI Taxonomy" id="9913"/>
    <lineage>
        <taxon>Eukaryota</taxon>
        <taxon>Metazoa</taxon>
        <taxon>Chordata</taxon>
        <taxon>Craniata</taxon>
        <taxon>Vertebrata</taxon>
        <taxon>Euteleostomi</taxon>
        <taxon>Mammalia</taxon>
        <taxon>Eutheria</taxon>
        <taxon>Laurasiatheria</taxon>
        <taxon>Artiodactyla</taxon>
        <taxon>Ruminantia</taxon>
        <taxon>Pecora</taxon>
        <taxon>Bovidae</taxon>
        <taxon>Bovinae</taxon>
        <taxon>Bos</taxon>
    </lineage>
</organism>
<proteinExistence type="evidence at transcript level"/>
<feature type="initiator methionine" description="Removed" evidence="1">
    <location>
        <position position="1"/>
    </location>
</feature>
<feature type="chain" id="PRO_0000327208" description="Caprin-1">
    <location>
        <begin position="2"/>
        <end position="708"/>
    </location>
</feature>
<feature type="region of interest" description="Disordered" evidence="5">
    <location>
        <begin position="1"/>
        <end position="48"/>
    </location>
</feature>
<feature type="region of interest" description="Disordered" evidence="5">
    <location>
        <begin position="258"/>
        <end position="287"/>
    </location>
</feature>
<feature type="region of interest" description="G3BP1-binding" evidence="1">
    <location>
        <begin position="358"/>
        <end position="379"/>
    </location>
</feature>
<feature type="region of interest" description="Disordered" evidence="5">
    <location>
        <begin position="415"/>
        <end position="459"/>
    </location>
</feature>
<feature type="region of interest" description="Disordered" evidence="5">
    <location>
        <begin position="473"/>
        <end position="497"/>
    </location>
</feature>
<feature type="region of interest" description="Disordered" evidence="5">
    <location>
        <begin position="521"/>
        <end position="559"/>
    </location>
</feature>
<feature type="region of interest" description="Disordered" evidence="5">
    <location>
        <begin position="571"/>
        <end position="708"/>
    </location>
</feature>
<feature type="coiled-coil region" evidence="4">
    <location>
        <begin position="58"/>
        <end position="92"/>
    </location>
</feature>
<feature type="coiled-coil region" evidence="4">
    <location>
        <begin position="123"/>
        <end position="151"/>
    </location>
</feature>
<feature type="compositionally biased region" description="Low complexity" evidence="5">
    <location>
        <begin position="1"/>
        <end position="15"/>
    </location>
</feature>
<feature type="compositionally biased region" description="Low complexity" evidence="5">
    <location>
        <begin position="22"/>
        <end position="37"/>
    </location>
</feature>
<feature type="compositionally biased region" description="Acidic residues" evidence="5">
    <location>
        <begin position="269"/>
        <end position="287"/>
    </location>
</feature>
<feature type="compositionally biased region" description="Polar residues" evidence="5">
    <location>
        <begin position="415"/>
        <end position="452"/>
    </location>
</feature>
<feature type="compositionally biased region" description="Low complexity" evidence="5">
    <location>
        <begin position="475"/>
        <end position="489"/>
    </location>
</feature>
<feature type="compositionally biased region" description="Low complexity" evidence="5">
    <location>
        <begin position="535"/>
        <end position="559"/>
    </location>
</feature>
<feature type="compositionally biased region" description="Polar residues" evidence="5">
    <location>
        <begin position="572"/>
        <end position="603"/>
    </location>
</feature>
<feature type="compositionally biased region" description="Polar residues" evidence="5">
    <location>
        <begin position="640"/>
        <end position="656"/>
    </location>
</feature>
<feature type="compositionally biased region" description="Low complexity" evidence="5">
    <location>
        <begin position="675"/>
        <end position="685"/>
    </location>
</feature>
<feature type="compositionally biased region" description="Low complexity" evidence="5">
    <location>
        <begin position="696"/>
        <end position="708"/>
    </location>
</feature>
<feature type="modified residue" description="N-acetylproline" evidence="1">
    <location>
        <position position="2"/>
    </location>
</feature>
<feature type="modified residue" description="Phosphoserine" evidence="1">
    <location>
        <position position="10"/>
    </location>
</feature>
<feature type="modified residue" description="Phosphoserine" evidence="1">
    <location>
        <position position="113"/>
    </location>
</feature>
<feature type="modified residue" description="Omega-N-methylarginine" evidence="3">
    <location>
        <position position="163"/>
    </location>
</feature>
<feature type="modified residue" description="Phosphoserine" evidence="1">
    <location>
        <position position="333"/>
    </location>
</feature>
<feature type="modified residue" description="Phosphoserine" evidence="1">
    <location>
        <position position="341"/>
    </location>
</feature>
<feature type="modified residue" description="Phosphotyrosine" evidence="1">
    <location>
        <position position="623"/>
    </location>
</feature>
<feature type="modified residue" description="Omega-N-methylarginine" evidence="1">
    <location>
        <position position="624"/>
    </location>
</feature>
<feature type="modified residue" description="Omega-N-methylarginine" evidence="1">
    <location>
        <position position="631"/>
    </location>
</feature>
<feature type="modified residue" description="Phosphotyrosine" evidence="1">
    <location>
        <position position="634"/>
    </location>
</feature>
<feature type="modified residue" description="Phosphotyrosine" evidence="1">
    <location>
        <position position="637"/>
    </location>
</feature>
<feature type="modified residue" description="Omega-N-methylarginine" evidence="1">
    <location>
        <position position="638"/>
    </location>
</feature>
<feature type="modified residue" description="Phosphotyrosine" evidence="1">
    <location>
        <position position="650"/>
    </location>
</feature>
<feature type="modified residue" description="Phosphotyrosine" evidence="1">
    <location>
        <position position="661"/>
    </location>
</feature>
<feature type="modified residue" description="Phosphotyrosine" evidence="1">
    <location>
        <position position="664"/>
    </location>
</feature>
<feature type="modified residue" description="Phosphotyrosine" evidence="1">
    <location>
        <position position="669"/>
    </location>
</feature>
<feature type="modified residue" description="Asymmetric dimethylarginine; alternate" evidence="1">
    <location>
        <position position="697"/>
    </location>
</feature>
<feature type="modified residue" description="Omega-N-methylarginine; alternate" evidence="1">
    <location>
        <position position="697"/>
    </location>
</feature>
<feature type="glycosylation site" description="O-linked (GlcNAc) serine" evidence="1">
    <location>
        <position position="642"/>
    </location>
</feature>
<feature type="glycosylation site" description="O-linked (GlcNAc) serine" evidence="1">
    <location>
        <position position="648"/>
    </location>
</feature>
<dbReference type="EMBL" id="BC116102">
    <property type="protein sequence ID" value="AAI16103.1"/>
    <property type="molecule type" value="mRNA"/>
</dbReference>
<dbReference type="RefSeq" id="NP_001069530.1">
    <property type="nucleotide sequence ID" value="NM_001076062.1"/>
</dbReference>
<dbReference type="RefSeq" id="XP_024831167.1">
    <property type="nucleotide sequence ID" value="XM_024975399.2"/>
</dbReference>
<dbReference type="SMR" id="Q1LZB6"/>
<dbReference type="BioGRID" id="192146">
    <property type="interactions" value="1"/>
</dbReference>
<dbReference type="FunCoup" id="Q1LZB6">
    <property type="interactions" value="4589"/>
</dbReference>
<dbReference type="STRING" id="9913.ENSBTAP00000022266"/>
<dbReference type="GlyGen" id="Q1LZB6">
    <property type="glycosylation" value="2 sites"/>
</dbReference>
<dbReference type="PaxDb" id="9913-ENSBTAP00000022266"/>
<dbReference type="PeptideAtlas" id="Q1LZB6"/>
<dbReference type="Ensembl" id="ENSBTAT00000022266.6">
    <property type="protein sequence ID" value="ENSBTAP00000022266.5"/>
    <property type="gene ID" value="ENSBTAG00000016744.7"/>
</dbReference>
<dbReference type="GeneID" id="535571"/>
<dbReference type="KEGG" id="bta:535571"/>
<dbReference type="CTD" id="4076"/>
<dbReference type="VEuPathDB" id="HostDB:ENSBTAG00000016744"/>
<dbReference type="VGNC" id="VGNC:26751">
    <property type="gene designation" value="CAPRIN1"/>
</dbReference>
<dbReference type="eggNOG" id="ENOG502QUGC">
    <property type="taxonomic scope" value="Eukaryota"/>
</dbReference>
<dbReference type="GeneTree" id="ENSGT00940000153438"/>
<dbReference type="InParanoid" id="Q1LZB6"/>
<dbReference type="OMA" id="GNNHWNS"/>
<dbReference type="OrthoDB" id="10062814at2759"/>
<dbReference type="Proteomes" id="UP000009136">
    <property type="component" value="Chromosome 15"/>
</dbReference>
<dbReference type="Bgee" id="ENSBTAG00000016744">
    <property type="expression patterns" value="Expressed in oviduct epithelium and 107 other cell types or tissues"/>
</dbReference>
<dbReference type="GO" id="GO:0031252">
    <property type="term" value="C:cell leading edge"/>
    <property type="evidence" value="ECO:0000250"/>
    <property type="project" value="UniProtKB"/>
</dbReference>
<dbReference type="GO" id="GO:0005737">
    <property type="term" value="C:cytoplasm"/>
    <property type="evidence" value="ECO:0000250"/>
    <property type="project" value="UniProtKB"/>
</dbReference>
<dbReference type="GO" id="GO:0010494">
    <property type="term" value="C:cytoplasmic stress granule"/>
    <property type="evidence" value="ECO:0000250"/>
    <property type="project" value="UniProtKB"/>
</dbReference>
<dbReference type="GO" id="GO:0005829">
    <property type="term" value="C:cytosol"/>
    <property type="evidence" value="ECO:0007669"/>
    <property type="project" value="UniProtKB-SubCell"/>
</dbReference>
<dbReference type="GO" id="GO:0030425">
    <property type="term" value="C:dendrite"/>
    <property type="evidence" value="ECO:0007669"/>
    <property type="project" value="UniProtKB-SubCell"/>
</dbReference>
<dbReference type="GO" id="GO:0043232">
    <property type="term" value="C:intracellular membraneless organelle"/>
    <property type="evidence" value="ECO:0000250"/>
    <property type="project" value="UniProtKB"/>
</dbReference>
<dbReference type="GO" id="GO:0030027">
    <property type="term" value="C:lamellipodium"/>
    <property type="evidence" value="ECO:0007669"/>
    <property type="project" value="UniProtKB-SubCell"/>
</dbReference>
<dbReference type="GO" id="GO:0000932">
    <property type="term" value="C:P-body"/>
    <property type="evidence" value="ECO:0000250"/>
    <property type="project" value="UniProtKB"/>
</dbReference>
<dbReference type="GO" id="GO:0045202">
    <property type="term" value="C:synapse"/>
    <property type="evidence" value="ECO:0007669"/>
    <property type="project" value="Ensembl"/>
</dbReference>
<dbReference type="GO" id="GO:0005524">
    <property type="term" value="F:ATP binding"/>
    <property type="evidence" value="ECO:0000250"/>
    <property type="project" value="UniProtKB"/>
</dbReference>
<dbReference type="GO" id="GO:0140693">
    <property type="term" value="F:molecular condensate scaffold activity"/>
    <property type="evidence" value="ECO:0000250"/>
    <property type="project" value="UniProtKB"/>
</dbReference>
<dbReference type="GO" id="GO:0140677">
    <property type="term" value="F:molecular function activator activity"/>
    <property type="evidence" value="ECO:0007669"/>
    <property type="project" value="Ensembl"/>
</dbReference>
<dbReference type="GO" id="GO:0003729">
    <property type="term" value="F:mRNA binding"/>
    <property type="evidence" value="ECO:0007669"/>
    <property type="project" value="Ensembl"/>
</dbReference>
<dbReference type="GO" id="GO:0003723">
    <property type="term" value="F:RNA binding"/>
    <property type="evidence" value="ECO:0000250"/>
    <property type="project" value="UniProtKB"/>
</dbReference>
<dbReference type="GO" id="GO:0035591">
    <property type="term" value="F:signaling adaptor activity"/>
    <property type="evidence" value="ECO:0007669"/>
    <property type="project" value="Ensembl"/>
</dbReference>
<dbReference type="GO" id="GO:0048699">
    <property type="term" value="P:generation of neurons"/>
    <property type="evidence" value="ECO:0007669"/>
    <property type="project" value="Ensembl"/>
</dbReference>
<dbReference type="GO" id="GO:0008298">
    <property type="term" value="P:intracellular mRNA localization"/>
    <property type="evidence" value="ECO:0007669"/>
    <property type="project" value="Ensembl"/>
</dbReference>
<dbReference type="GO" id="GO:0140694">
    <property type="term" value="P:membraneless organelle assembly"/>
    <property type="evidence" value="ECO:0007669"/>
    <property type="project" value="Ensembl"/>
</dbReference>
<dbReference type="GO" id="GO:0017148">
    <property type="term" value="P:negative regulation of translation"/>
    <property type="evidence" value="ECO:0000250"/>
    <property type="project" value="UniProtKB"/>
</dbReference>
<dbReference type="GO" id="GO:0050775">
    <property type="term" value="P:positive regulation of dendrite morphogenesis"/>
    <property type="evidence" value="ECO:0000250"/>
    <property type="project" value="UniProtKB"/>
</dbReference>
<dbReference type="GO" id="GO:0061003">
    <property type="term" value="P:positive regulation of dendritic spine morphogenesis"/>
    <property type="evidence" value="ECO:0000250"/>
    <property type="project" value="UniProtKB"/>
</dbReference>
<dbReference type="GO" id="GO:0062029">
    <property type="term" value="P:positive regulation of stress granule assembly"/>
    <property type="evidence" value="ECO:0000250"/>
    <property type="project" value="UniProtKB"/>
</dbReference>
<dbReference type="GO" id="GO:0106288">
    <property type="term" value="P:regulation of deadenylation-dependent decapping of nuclear-transcribed mRNA"/>
    <property type="evidence" value="ECO:0000250"/>
    <property type="project" value="UniProtKB"/>
</dbReference>
<dbReference type="GO" id="GO:0007416">
    <property type="term" value="P:synapse assembly"/>
    <property type="evidence" value="ECO:0007669"/>
    <property type="project" value="Ensembl"/>
</dbReference>
<dbReference type="InterPro" id="IPR028816">
    <property type="entry name" value="Caprin"/>
</dbReference>
<dbReference type="InterPro" id="IPR022070">
    <property type="entry name" value="Caprin-1_C"/>
</dbReference>
<dbReference type="InterPro" id="IPR041637">
    <property type="entry name" value="Caprin-1_dimer"/>
</dbReference>
<dbReference type="PANTHER" id="PTHR22922:SF3">
    <property type="entry name" value="CAPRIN-1"/>
    <property type="match status" value="1"/>
</dbReference>
<dbReference type="PANTHER" id="PTHR22922">
    <property type="entry name" value="GPI-ANCHORED PROTEIN P137"/>
    <property type="match status" value="1"/>
</dbReference>
<dbReference type="Pfam" id="PF12287">
    <property type="entry name" value="Caprin-1_C"/>
    <property type="match status" value="1"/>
</dbReference>
<dbReference type="Pfam" id="PF18293">
    <property type="entry name" value="Caprin-1_dimer"/>
    <property type="match status" value="1"/>
</dbReference>
<name>CAPR1_BOVIN</name>
<accession>Q1LZB6</accession>
<comment type="function">
    <text evidence="1">mRNA-binding protein that acts as a regulator of mRNAs transport, translation and/or stability, and which is involved in neurogenesis, synaptic plasticity in neurons and cell proliferation and migration in multiple cell types. Plays an essential role in cytoplasmic stress granule formation (By similarity). Acts as an mRNA regulator by mediating formation of some phase-separated membraneless compartment: undergoes liquid-liquid phase separation upon binding to target mRNAs, leading to assemble mRNAs into cytoplasmic ribonucleoprotein granules that concentrate mRNAs with associated regulatory factors. Undergoes liquid-liquid phase separation following phosphorylation and interaction with FMR1, promoting formation of cytoplasmic ribonucleoprotein granules that concentrate mRNAs with factors that inhibit translation and mediate deadenylation of target mRNAs. In these cytoplasmic ribonucleoprotein granules, CAPRIN1 mediates recruitment of CNOT7 deadenylase, leading to mRNA deadenylation and degradation. Binds directly and selectively to MYC and CCND2 mRNAs. In neuronal cells, directly binds to several mRNAs associated with RNA granules, including BDNF, CAMK2A, CREB1, MAP2, NTRK2 mRNAs, as well as to GRIN1 and KPNB1 mRNAs, but not to rRNAs.</text>
</comment>
<comment type="activity regulation">
    <text evidence="1">Ability to mediate liquid-liquid phase separation is regulated by ATP: moderate concentrations of ATP enhance phase separation, whereas high concentrations of ATP lead to inhibition of phase separation.</text>
</comment>
<comment type="subunit">
    <text evidence="1">May form homomultimers. Interacts with G3BP1; interaction is direct and promotes stress granule formation. Interacts with G3BP2; interaction is direct and promotes stress granule formation. Interacts with PQBP1. Interacts with DDX3X. Interacts (when phosphorylated by EPHA4) with FMR1; interaction with FMR1 promotes formation of a membraneless compartment.</text>
</comment>
<comment type="subcellular location">
    <subcellularLocation>
        <location evidence="1">Cytoplasm</location>
        <location evidence="1">Cytoplasmic ribonucleoprotein granule</location>
    </subcellularLocation>
    <subcellularLocation>
        <location evidence="1">Cytoplasm</location>
        <location evidence="1">Cytosol</location>
    </subcellularLocation>
    <subcellularLocation>
        <location evidence="2">Cell projection</location>
        <location evidence="2">Dendrite</location>
    </subcellularLocation>
    <subcellularLocation>
        <location evidence="1">Cell projection</location>
        <location evidence="1">Lamellipodium</location>
    </subcellularLocation>
    <text evidence="1">Mediates formation and localizes to cytoplasmic ribonucleoprotein membraneless compartments. Associated with RNA granules. At the leading edge of migrating fibroblasts, colocalizes with DDX3X.</text>
</comment>
<comment type="domain">
    <text evidence="1">The C-terminal disordered region undergoes liquid-liquid phase separation (LLPS) for the formation of a membraneless compartment that concentrates mRNAs with associated regulatory factors. CAPRIN1 molecules in the condensed phase are neutral. mRNA-binding promotes phase separation. Moderate concentrations of ATP enhance phase separation by reducing the electrostatic potential of CAPRIN1, thereby promoting intermolecular interactions. In contrast, high concentrations of ATP invert the electrostatic potential of CAPRIN1, so that CAPRIN1 molecules become negatively charged, lead to inhibition of phase separation.</text>
</comment>
<comment type="PTM">
    <text evidence="1">Tyrosine phosphorylation by EPHA4 promotes interaction with FMR1 and liquid-liquid phase separation (LLPS) for the formation of a membraneless compartment that concentrates mRNAs with associated regulatory factors.</text>
</comment>
<comment type="PTM">
    <text evidence="1">O-glycosylated (O-GlcNAcylated), in a cell cycle-dependent manner. O-glycosylation by OGT inhibit ability to undergo liquid-liquid phase separation (LLPS).</text>
</comment>
<comment type="similarity">
    <text evidence="6">Belongs to the caprin family.</text>
</comment>
<keyword id="KW-0007">Acetylation</keyword>
<keyword id="KW-0067">ATP-binding</keyword>
<keyword id="KW-0966">Cell projection</keyword>
<keyword id="KW-0175">Coiled coil</keyword>
<keyword id="KW-0963">Cytoplasm</keyword>
<keyword id="KW-0221">Differentiation</keyword>
<keyword id="KW-0325">Glycoprotein</keyword>
<keyword id="KW-0488">Methylation</keyword>
<keyword id="KW-0547">Nucleotide-binding</keyword>
<keyword id="KW-0597">Phosphoprotein</keyword>
<keyword id="KW-0652">Protein synthesis inhibitor</keyword>
<keyword id="KW-1185">Reference proteome</keyword>
<keyword id="KW-0694">RNA-binding</keyword>
<evidence type="ECO:0000250" key="1">
    <source>
        <dbReference type="UniProtKB" id="Q14444"/>
    </source>
</evidence>
<evidence type="ECO:0000250" key="2">
    <source>
        <dbReference type="UniProtKB" id="Q5M9G3"/>
    </source>
</evidence>
<evidence type="ECO:0000250" key="3">
    <source>
        <dbReference type="UniProtKB" id="Q60865"/>
    </source>
</evidence>
<evidence type="ECO:0000255" key="4"/>
<evidence type="ECO:0000256" key="5">
    <source>
        <dbReference type="SAM" id="MobiDB-lite"/>
    </source>
</evidence>
<evidence type="ECO:0000305" key="6"/>